<comment type="similarity">
    <text evidence="1">Belongs to the bacterial ribosomal protein bL36 family.</text>
</comment>
<feature type="chain" id="PRO_1000101001" description="Large ribosomal subunit protein bL36">
    <location>
        <begin position="1"/>
        <end position="37"/>
    </location>
</feature>
<organism>
    <name type="scientific">Bifidobacterium longum (strain DJO10A)</name>
    <dbReference type="NCBI Taxonomy" id="205913"/>
    <lineage>
        <taxon>Bacteria</taxon>
        <taxon>Bacillati</taxon>
        <taxon>Actinomycetota</taxon>
        <taxon>Actinomycetes</taxon>
        <taxon>Bifidobacteriales</taxon>
        <taxon>Bifidobacteriaceae</taxon>
        <taxon>Bifidobacterium</taxon>
    </lineage>
</organism>
<evidence type="ECO:0000255" key="1">
    <source>
        <dbReference type="HAMAP-Rule" id="MF_00251"/>
    </source>
</evidence>
<evidence type="ECO:0000305" key="2"/>
<dbReference type="EMBL" id="CP000605">
    <property type="protein sequence ID" value="ACD99175.1"/>
    <property type="molecule type" value="Genomic_DNA"/>
</dbReference>
<dbReference type="RefSeq" id="WP_003808136.1">
    <property type="nucleotide sequence ID" value="NZ_AABM02000016.1"/>
</dbReference>
<dbReference type="SMR" id="B3DQD7"/>
<dbReference type="GeneID" id="85165080"/>
<dbReference type="KEGG" id="blj:BLD_1730"/>
<dbReference type="HOGENOM" id="CLU_135723_6_2_11"/>
<dbReference type="Proteomes" id="UP000002419">
    <property type="component" value="Chromosome"/>
</dbReference>
<dbReference type="GO" id="GO:0005737">
    <property type="term" value="C:cytoplasm"/>
    <property type="evidence" value="ECO:0007669"/>
    <property type="project" value="UniProtKB-ARBA"/>
</dbReference>
<dbReference type="GO" id="GO:1990904">
    <property type="term" value="C:ribonucleoprotein complex"/>
    <property type="evidence" value="ECO:0007669"/>
    <property type="project" value="UniProtKB-KW"/>
</dbReference>
<dbReference type="GO" id="GO:0005840">
    <property type="term" value="C:ribosome"/>
    <property type="evidence" value="ECO:0007669"/>
    <property type="project" value="UniProtKB-KW"/>
</dbReference>
<dbReference type="GO" id="GO:0003735">
    <property type="term" value="F:structural constituent of ribosome"/>
    <property type="evidence" value="ECO:0007669"/>
    <property type="project" value="InterPro"/>
</dbReference>
<dbReference type="GO" id="GO:0006412">
    <property type="term" value="P:translation"/>
    <property type="evidence" value="ECO:0007669"/>
    <property type="project" value="UniProtKB-UniRule"/>
</dbReference>
<dbReference type="HAMAP" id="MF_00251">
    <property type="entry name" value="Ribosomal_bL36"/>
    <property type="match status" value="1"/>
</dbReference>
<dbReference type="InterPro" id="IPR000473">
    <property type="entry name" value="Ribosomal_bL36"/>
</dbReference>
<dbReference type="InterPro" id="IPR035977">
    <property type="entry name" value="Ribosomal_bL36_sp"/>
</dbReference>
<dbReference type="NCBIfam" id="TIGR01022">
    <property type="entry name" value="rpmJ_bact"/>
    <property type="match status" value="1"/>
</dbReference>
<dbReference type="PANTHER" id="PTHR42888">
    <property type="entry name" value="50S RIBOSOMAL PROTEIN L36, CHLOROPLASTIC"/>
    <property type="match status" value="1"/>
</dbReference>
<dbReference type="PANTHER" id="PTHR42888:SF1">
    <property type="entry name" value="LARGE RIBOSOMAL SUBUNIT PROTEIN BL36C"/>
    <property type="match status" value="1"/>
</dbReference>
<dbReference type="Pfam" id="PF00444">
    <property type="entry name" value="Ribosomal_L36"/>
    <property type="match status" value="1"/>
</dbReference>
<dbReference type="SUPFAM" id="SSF57840">
    <property type="entry name" value="Ribosomal protein L36"/>
    <property type="match status" value="1"/>
</dbReference>
<dbReference type="PROSITE" id="PS00828">
    <property type="entry name" value="RIBOSOMAL_L36"/>
    <property type="match status" value="1"/>
</dbReference>
<gene>
    <name evidence="1" type="primary">rpmJ</name>
    <name type="ordered locus">BLD_1730</name>
</gene>
<accession>B3DQD7</accession>
<name>RL36_BIFLD</name>
<reference key="1">
    <citation type="journal article" date="2008" name="BMC Genomics">
        <title>Comparative genomic analysis of the gut bacterium Bifidobacterium longum reveals loci susceptible to deletion during pure culture growth.</title>
        <authorList>
            <person name="Lee J.H."/>
            <person name="Karamychev V.N."/>
            <person name="Kozyavkin S.A."/>
            <person name="Mills D."/>
            <person name="Pavlov A.R."/>
            <person name="Pavlova N.V."/>
            <person name="Polouchine N.N."/>
            <person name="Richardson P.M."/>
            <person name="Shakhova V.V."/>
            <person name="Slesarev A.I."/>
            <person name="Weimer B."/>
            <person name="O'Sullivan D.J."/>
        </authorList>
    </citation>
    <scope>NUCLEOTIDE SEQUENCE [LARGE SCALE GENOMIC DNA]</scope>
    <source>
        <strain>DJO10A</strain>
    </source>
</reference>
<protein>
    <recommendedName>
        <fullName evidence="1">Large ribosomal subunit protein bL36</fullName>
    </recommendedName>
    <alternativeName>
        <fullName evidence="2">50S ribosomal protein L36</fullName>
    </alternativeName>
</protein>
<proteinExistence type="inferred from homology"/>
<keyword id="KW-0687">Ribonucleoprotein</keyword>
<keyword id="KW-0689">Ribosomal protein</keyword>
<sequence length="37" mass="4372">MKVSPSVKRICENCRVIRRHGRVMVICVNPRHKQRQG</sequence>